<gene>
    <name type="primary">ins</name>
</gene>
<name>INS_CYPCA</name>
<feature type="signal peptide" evidence="2">
    <location>
        <begin position="1"/>
        <end position="21"/>
    </location>
</feature>
<feature type="peptide" id="PRO_0000015802" description="Insulin B chain">
    <location>
        <begin position="22"/>
        <end position="51"/>
    </location>
</feature>
<feature type="propeptide" id="PRO_0000015803" description="C peptide">
    <location>
        <begin position="54"/>
        <end position="85"/>
    </location>
</feature>
<feature type="peptide" id="PRO_0000015804" description="Insulin A chain" evidence="1">
    <location>
        <begin position="88"/>
        <end position="108"/>
    </location>
</feature>
<feature type="disulfide bond" description="Interchain (between B and A chains)">
    <location>
        <begin position="30"/>
        <end position="94"/>
    </location>
</feature>
<feature type="disulfide bond" description="Interchain (between B and A chains)">
    <location>
        <begin position="42"/>
        <end position="107"/>
    </location>
</feature>
<feature type="disulfide bond">
    <location>
        <begin position="93"/>
        <end position="98"/>
    </location>
</feature>
<reference key="1">
    <citation type="journal article" date="1983" name="Nucleic Acids Res.">
        <title>Carp preproinsulin cDNA sequence and evolution of insulin genes.</title>
        <authorList>
            <person name="Hahn V."/>
            <person name="Winkler J."/>
            <person name="Rapoport T.A."/>
            <person name="Liebscher D.-H."/>
            <person name="Coutelle C."/>
            <person name="Rosenthal S."/>
        </authorList>
    </citation>
    <scope>NUCLEOTIDE SEQUENCE [MRNA]</scope>
</reference>
<reference key="2">
    <citation type="journal article" date="1982" name="Eur. J. Biochem.">
        <title>Carp insulin: amino acid sequence, biological activity and structural properties.</title>
        <authorList>
            <person name="Makower A."/>
            <person name="Dettmer R."/>
            <person name="Rapoport T.A."/>
            <person name="Knospe S."/>
            <person name="Behlke J."/>
            <person name="Prehn S."/>
            <person name="Franke P."/>
            <person name="Etzold G."/>
            <person name="Rosenthal S."/>
        </authorList>
    </citation>
    <scope>PROTEIN SEQUENCE OF 22-108</scope>
</reference>
<accession>P01335</accession>
<comment type="function">
    <text>Insulin decreases blood glucose concentration. It increases cell permeability to monosaccharides, amino acids and fatty acids. It accelerates glycolysis, the pentose phosphate cycle, and glycogen synthesis in liver.</text>
</comment>
<comment type="subunit">
    <text>Heterodimer of a B chain and an A chain linked by two disulfide bonds.</text>
</comment>
<comment type="subcellular location">
    <subcellularLocation>
        <location>Secreted</location>
    </subcellularLocation>
</comment>
<comment type="similarity">
    <text evidence="3">Belongs to the insulin family.</text>
</comment>
<keyword id="KW-0119">Carbohydrate metabolism</keyword>
<keyword id="KW-0165">Cleavage on pair of basic residues</keyword>
<keyword id="KW-0903">Direct protein sequencing</keyword>
<keyword id="KW-1015">Disulfide bond</keyword>
<keyword id="KW-0313">Glucose metabolism</keyword>
<keyword id="KW-0372">Hormone</keyword>
<keyword id="KW-1185">Reference proteome</keyword>
<keyword id="KW-0964">Secreted</keyword>
<keyword id="KW-0732">Signal</keyword>
<organism>
    <name type="scientific">Cyprinus carpio</name>
    <name type="common">Common carp</name>
    <dbReference type="NCBI Taxonomy" id="7962"/>
    <lineage>
        <taxon>Eukaryota</taxon>
        <taxon>Metazoa</taxon>
        <taxon>Chordata</taxon>
        <taxon>Craniata</taxon>
        <taxon>Vertebrata</taxon>
        <taxon>Euteleostomi</taxon>
        <taxon>Actinopterygii</taxon>
        <taxon>Neopterygii</taxon>
        <taxon>Teleostei</taxon>
        <taxon>Ostariophysi</taxon>
        <taxon>Cypriniformes</taxon>
        <taxon>Cyprinidae</taxon>
        <taxon>Cyprininae</taxon>
        <taxon>Cyprinus</taxon>
    </lineage>
</organism>
<dbReference type="EMBL" id="X00989">
    <property type="protein sequence ID" value="CAA25496.1"/>
    <property type="molecule type" value="mRNA"/>
</dbReference>
<dbReference type="PIR" id="A01602">
    <property type="entry name" value="IPCA"/>
</dbReference>
<dbReference type="SMR" id="P01335"/>
<dbReference type="Proteomes" id="UP000694384">
    <property type="component" value="Unplaced"/>
</dbReference>
<dbReference type="Proteomes" id="UP000694427">
    <property type="component" value="Unplaced"/>
</dbReference>
<dbReference type="Proteomes" id="UP000694700">
    <property type="component" value="Unplaced"/>
</dbReference>
<dbReference type="Proteomes" id="UP000694701">
    <property type="component" value="Unplaced"/>
</dbReference>
<dbReference type="Proteomes" id="UP001155660">
    <property type="component" value="Unplaced"/>
</dbReference>
<dbReference type="GO" id="GO:0005615">
    <property type="term" value="C:extracellular space"/>
    <property type="evidence" value="ECO:0007669"/>
    <property type="project" value="TreeGrafter"/>
</dbReference>
<dbReference type="GO" id="GO:0005179">
    <property type="term" value="F:hormone activity"/>
    <property type="evidence" value="ECO:0007669"/>
    <property type="project" value="UniProtKB-KW"/>
</dbReference>
<dbReference type="GO" id="GO:0006006">
    <property type="term" value="P:glucose metabolic process"/>
    <property type="evidence" value="ECO:0007669"/>
    <property type="project" value="UniProtKB-KW"/>
</dbReference>
<dbReference type="CDD" id="cd04367">
    <property type="entry name" value="IlGF_insulin_like"/>
    <property type="match status" value="1"/>
</dbReference>
<dbReference type="FunFam" id="1.10.100.10:FF:000003">
    <property type="entry name" value="Insulin"/>
    <property type="match status" value="1"/>
</dbReference>
<dbReference type="Gene3D" id="1.10.100.10">
    <property type="entry name" value="Insulin-like"/>
    <property type="match status" value="1"/>
</dbReference>
<dbReference type="InterPro" id="IPR004825">
    <property type="entry name" value="Insulin"/>
</dbReference>
<dbReference type="InterPro" id="IPR016179">
    <property type="entry name" value="Insulin-like"/>
</dbReference>
<dbReference type="InterPro" id="IPR036438">
    <property type="entry name" value="Insulin-like_sf"/>
</dbReference>
<dbReference type="InterPro" id="IPR022353">
    <property type="entry name" value="Insulin_CS"/>
</dbReference>
<dbReference type="InterPro" id="IPR022352">
    <property type="entry name" value="Insulin_family"/>
</dbReference>
<dbReference type="PANTHER" id="PTHR11454:SF9">
    <property type="entry name" value="INSULIN"/>
    <property type="match status" value="1"/>
</dbReference>
<dbReference type="PANTHER" id="PTHR11454">
    <property type="entry name" value="INSULIN/INSULIN GROWTH FACTOR"/>
    <property type="match status" value="1"/>
</dbReference>
<dbReference type="Pfam" id="PF00049">
    <property type="entry name" value="Insulin"/>
    <property type="match status" value="1"/>
</dbReference>
<dbReference type="PRINTS" id="PR00277">
    <property type="entry name" value="INSULIN"/>
</dbReference>
<dbReference type="PRINTS" id="PR00276">
    <property type="entry name" value="INSULINFAMLY"/>
</dbReference>
<dbReference type="SMART" id="SM00078">
    <property type="entry name" value="IlGF"/>
    <property type="match status" value="1"/>
</dbReference>
<dbReference type="SUPFAM" id="SSF56994">
    <property type="entry name" value="Insulin-like"/>
    <property type="match status" value="1"/>
</dbReference>
<dbReference type="PROSITE" id="PS00262">
    <property type="entry name" value="INSULIN"/>
    <property type="match status" value="1"/>
</dbReference>
<proteinExistence type="evidence at protein level"/>
<evidence type="ECO:0000269" key="1">
    <source>
    </source>
</evidence>
<evidence type="ECO:0000269" key="2">
    <source>
    </source>
</evidence>
<evidence type="ECO:0000305" key="3"/>
<protein>
    <recommendedName>
        <fullName>Insulin</fullName>
    </recommendedName>
    <component>
        <recommendedName>
            <fullName>Insulin B chain</fullName>
        </recommendedName>
    </component>
    <component>
        <recommendedName>
            <fullName>Insulin A chain</fullName>
        </recommendedName>
    </component>
</protein>
<sequence>MAVWIQAGALLFLLAVSSVNANAGAPQHLCGSHLVDALYLVCGPTGFFYNPKRDVDPPLGFLPPKSAQETEVADFAFKDHAEVIRKRGIVEQCCHKPCSIFELQNYCN</sequence>